<proteinExistence type="inferred from homology"/>
<protein>
    <recommendedName>
        <fullName evidence="1">Elongation factor Ts</fullName>
        <shortName evidence="1">EF-Ts</shortName>
    </recommendedName>
</protein>
<dbReference type="EMBL" id="CP000251">
    <property type="protein sequence ID" value="ABC80048.1"/>
    <property type="molecule type" value="Genomic_DNA"/>
</dbReference>
<dbReference type="RefSeq" id="WP_011419331.1">
    <property type="nucleotide sequence ID" value="NC_007760.1"/>
</dbReference>
<dbReference type="SMR" id="Q2IMM0"/>
<dbReference type="STRING" id="290397.Adeh_0272"/>
<dbReference type="KEGG" id="ade:Adeh_0272"/>
<dbReference type="eggNOG" id="COG0264">
    <property type="taxonomic scope" value="Bacteria"/>
</dbReference>
<dbReference type="HOGENOM" id="CLU_047155_1_1_7"/>
<dbReference type="OrthoDB" id="9808348at2"/>
<dbReference type="Proteomes" id="UP000001935">
    <property type="component" value="Chromosome"/>
</dbReference>
<dbReference type="GO" id="GO:0005737">
    <property type="term" value="C:cytoplasm"/>
    <property type="evidence" value="ECO:0007669"/>
    <property type="project" value="UniProtKB-SubCell"/>
</dbReference>
<dbReference type="GO" id="GO:0003746">
    <property type="term" value="F:translation elongation factor activity"/>
    <property type="evidence" value="ECO:0007669"/>
    <property type="project" value="UniProtKB-UniRule"/>
</dbReference>
<dbReference type="CDD" id="cd14275">
    <property type="entry name" value="UBA_EF-Ts"/>
    <property type="match status" value="1"/>
</dbReference>
<dbReference type="FunFam" id="1.10.286.20:FF:000001">
    <property type="entry name" value="Elongation factor Ts"/>
    <property type="match status" value="1"/>
</dbReference>
<dbReference type="FunFam" id="1.10.8.10:FF:000001">
    <property type="entry name" value="Elongation factor Ts"/>
    <property type="match status" value="1"/>
</dbReference>
<dbReference type="Gene3D" id="1.10.286.20">
    <property type="match status" value="1"/>
</dbReference>
<dbReference type="Gene3D" id="1.10.8.10">
    <property type="entry name" value="DNA helicase RuvA subunit, C-terminal domain"/>
    <property type="match status" value="1"/>
</dbReference>
<dbReference type="Gene3D" id="3.30.479.20">
    <property type="entry name" value="Elongation factor Ts, dimerisation domain"/>
    <property type="match status" value="1"/>
</dbReference>
<dbReference type="HAMAP" id="MF_00050">
    <property type="entry name" value="EF_Ts"/>
    <property type="match status" value="1"/>
</dbReference>
<dbReference type="InterPro" id="IPR036402">
    <property type="entry name" value="EF-Ts_dimer_sf"/>
</dbReference>
<dbReference type="InterPro" id="IPR001816">
    <property type="entry name" value="Transl_elong_EFTs/EF1B"/>
</dbReference>
<dbReference type="InterPro" id="IPR014039">
    <property type="entry name" value="Transl_elong_EFTs/EF1B_dimer"/>
</dbReference>
<dbReference type="InterPro" id="IPR018101">
    <property type="entry name" value="Transl_elong_Ts_CS"/>
</dbReference>
<dbReference type="InterPro" id="IPR009060">
    <property type="entry name" value="UBA-like_sf"/>
</dbReference>
<dbReference type="NCBIfam" id="TIGR00116">
    <property type="entry name" value="tsf"/>
    <property type="match status" value="2"/>
</dbReference>
<dbReference type="PANTHER" id="PTHR11741">
    <property type="entry name" value="ELONGATION FACTOR TS"/>
    <property type="match status" value="1"/>
</dbReference>
<dbReference type="PANTHER" id="PTHR11741:SF0">
    <property type="entry name" value="ELONGATION FACTOR TS, MITOCHONDRIAL"/>
    <property type="match status" value="1"/>
</dbReference>
<dbReference type="Pfam" id="PF00889">
    <property type="entry name" value="EF_TS"/>
    <property type="match status" value="1"/>
</dbReference>
<dbReference type="SUPFAM" id="SSF54713">
    <property type="entry name" value="Elongation factor Ts (EF-Ts), dimerisation domain"/>
    <property type="match status" value="1"/>
</dbReference>
<dbReference type="SUPFAM" id="SSF46934">
    <property type="entry name" value="UBA-like"/>
    <property type="match status" value="1"/>
</dbReference>
<dbReference type="PROSITE" id="PS01126">
    <property type="entry name" value="EF_TS_1"/>
    <property type="match status" value="1"/>
</dbReference>
<dbReference type="PROSITE" id="PS01127">
    <property type="entry name" value="EF_TS_2"/>
    <property type="match status" value="1"/>
</dbReference>
<accession>Q2IMM0</accession>
<keyword id="KW-0963">Cytoplasm</keyword>
<keyword id="KW-0251">Elongation factor</keyword>
<keyword id="KW-0648">Protein biosynthesis</keyword>
<keyword id="KW-1185">Reference proteome</keyword>
<name>EFTS_ANADE</name>
<comment type="function">
    <text evidence="1">Associates with the EF-Tu.GDP complex and induces the exchange of GDP to GTP. It remains bound to the aminoacyl-tRNA.EF-Tu.GTP complex up to the GTP hydrolysis stage on the ribosome.</text>
</comment>
<comment type="subcellular location">
    <subcellularLocation>
        <location evidence="1">Cytoplasm</location>
    </subcellularLocation>
</comment>
<comment type="similarity">
    <text evidence="1">Belongs to the EF-Ts family.</text>
</comment>
<reference key="1">
    <citation type="submission" date="2006-01" db="EMBL/GenBank/DDBJ databases">
        <title>Complete sequence of Anaeromyxobacter dehalogenans 2CP-C.</title>
        <authorList>
            <person name="Copeland A."/>
            <person name="Lucas S."/>
            <person name="Lapidus A."/>
            <person name="Barry K."/>
            <person name="Detter J.C."/>
            <person name="Glavina T."/>
            <person name="Hammon N."/>
            <person name="Israni S."/>
            <person name="Pitluck S."/>
            <person name="Brettin T."/>
            <person name="Bruce D."/>
            <person name="Han C."/>
            <person name="Tapia R."/>
            <person name="Gilna P."/>
            <person name="Kiss H."/>
            <person name="Schmutz J."/>
            <person name="Larimer F."/>
            <person name="Land M."/>
            <person name="Kyrpides N."/>
            <person name="Anderson I."/>
            <person name="Sanford R.A."/>
            <person name="Ritalahti K.M."/>
            <person name="Thomas H.S."/>
            <person name="Kirby J.R."/>
            <person name="Zhulin I.B."/>
            <person name="Loeffler F.E."/>
            <person name="Richardson P."/>
        </authorList>
    </citation>
    <scope>NUCLEOTIDE SEQUENCE [LARGE SCALE GENOMIC DNA]</scope>
    <source>
        <strain>2CP-C</strain>
    </source>
</reference>
<sequence>MAEISAKMVQELREKTGAGMMDCKKALTEAGGDLVKAEEVLRKKGLSAAAKKTGRAATEGAVASYIHMGGKIGVLVEVNCETDFVARTEGFQGLVKEIAMQIAAASPRWVRREEVPADVVAKELEIAKAQAREQKKPEAILEKIATGKVEKFYSEFCLMEQAWVKDDKKKIQDVLTDAVAKIGENIQIRRFARFVLGEGLEKKQENLAEEVAKAAGLQK</sequence>
<feature type="chain" id="PRO_0000241458" description="Elongation factor Ts">
    <location>
        <begin position="1"/>
        <end position="219"/>
    </location>
</feature>
<feature type="region of interest" description="Involved in Mg(2+) ion dislocation from EF-Tu" evidence="1">
    <location>
        <begin position="82"/>
        <end position="85"/>
    </location>
</feature>
<evidence type="ECO:0000255" key="1">
    <source>
        <dbReference type="HAMAP-Rule" id="MF_00050"/>
    </source>
</evidence>
<gene>
    <name evidence="1" type="primary">tsf</name>
    <name type="ordered locus">Adeh_0272</name>
</gene>
<organism>
    <name type="scientific">Anaeromyxobacter dehalogenans (strain 2CP-C)</name>
    <dbReference type="NCBI Taxonomy" id="290397"/>
    <lineage>
        <taxon>Bacteria</taxon>
        <taxon>Pseudomonadati</taxon>
        <taxon>Myxococcota</taxon>
        <taxon>Myxococcia</taxon>
        <taxon>Myxococcales</taxon>
        <taxon>Cystobacterineae</taxon>
        <taxon>Anaeromyxobacteraceae</taxon>
        <taxon>Anaeromyxobacter</taxon>
    </lineage>
</organism>